<gene>
    <name evidence="1" type="primary">deoC</name>
    <name type="ordered locus">HAPS_1221</name>
</gene>
<reference key="1">
    <citation type="journal article" date="2009" name="J. Bacteriol.">
        <title>Complete genome sequence of Haemophilus parasuis SH0165.</title>
        <authorList>
            <person name="Yue M."/>
            <person name="Yang F."/>
            <person name="Yang J."/>
            <person name="Bei W."/>
            <person name="Cai X."/>
            <person name="Chen L."/>
            <person name="Dong J."/>
            <person name="Zhou R."/>
            <person name="Jin M."/>
            <person name="Jin Q."/>
            <person name="Chen H."/>
        </authorList>
    </citation>
    <scope>NUCLEOTIDE SEQUENCE [LARGE SCALE GENOMIC DNA]</scope>
    <source>
        <strain>SH0165</strain>
    </source>
</reference>
<name>DEOC_GLAP5</name>
<comment type="function">
    <text evidence="1">Catalyzes a reversible aldol reaction between acetaldehyde and D-glyceraldehyde 3-phosphate to generate 2-deoxy-D-ribose 5-phosphate.</text>
</comment>
<comment type="catalytic activity">
    <reaction evidence="1">
        <text>2-deoxy-D-ribose 5-phosphate = D-glyceraldehyde 3-phosphate + acetaldehyde</text>
        <dbReference type="Rhea" id="RHEA:12821"/>
        <dbReference type="ChEBI" id="CHEBI:15343"/>
        <dbReference type="ChEBI" id="CHEBI:59776"/>
        <dbReference type="ChEBI" id="CHEBI:62877"/>
        <dbReference type="EC" id="4.1.2.4"/>
    </reaction>
</comment>
<comment type="pathway">
    <text evidence="1">Carbohydrate degradation; 2-deoxy-D-ribose 1-phosphate degradation; D-glyceraldehyde 3-phosphate and acetaldehyde from 2-deoxy-alpha-D-ribose 1-phosphate: step 2/2.</text>
</comment>
<comment type="subcellular location">
    <subcellularLocation>
        <location evidence="1">Cytoplasm</location>
    </subcellularLocation>
</comment>
<comment type="similarity">
    <text evidence="1">Belongs to the DeoC/FbaB aldolase family. DeoC type 2 subfamily.</text>
</comment>
<dbReference type="EC" id="4.1.2.4" evidence="1"/>
<dbReference type="EMBL" id="CP001321">
    <property type="protein sequence ID" value="ACL32823.1"/>
    <property type="molecule type" value="Genomic_DNA"/>
</dbReference>
<dbReference type="RefSeq" id="WP_010786152.1">
    <property type="nucleotide sequence ID" value="NC_011852.1"/>
</dbReference>
<dbReference type="SMR" id="B8F671"/>
<dbReference type="STRING" id="557723.HAPS_1221"/>
<dbReference type="KEGG" id="hap:HAPS_1221"/>
<dbReference type="HOGENOM" id="CLU_053595_3_1_6"/>
<dbReference type="UniPathway" id="UPA00002">
    <property type="reaction ID" value="UER00468"/>
</dbReference>
<dbReference type="Proteomes" id="UP000006743">
    <property type="component" value="Chromosome"/>
</dbReference>
<dbReference type="GO" id="GO:0005737">
    <property type="term" value="C:cytoplasm"/>
    <property type="evidence" value="ECO:0007669"/>
    <property type="project" value="UniProtKB-SubCell"/>
</dbReference>
<dbReference type="GO" id="GO:0004139">
    <property type="term" value="F:deoxyribose-phosphate aldolase activity"/>
    <property type="evidence" value="ECO:0007669"/>
    <property type="project" value="UniProtKB-UniRule"/>
</dbReference>
<dbReference type="GO" id="GO:0006018">
    <property type="term" value="P:2-deoxyribose 1-phosphate catabolic process"/>
    <property type="evidence" value="ECO:0007669"/>
    <property type="project" value="UniProtKB-UniRule"/>
</dbReference>
<dbReference type="GO" id="GO:0016052">
    <property type="term" value="P:carbohydrate catabolic process"/>
    <property type="evidence" value="ECO:0007669"/>
    <property type="project" value="TreeGrafter"/>
</dbReference>
<dbReference type="GO" id="GO:0009264">
    <property type="term" value="P:deoxyribonucleotide catabolic process"/>
    <property type="evidence" value="ECO:0007669"/>
    <property type="project" value="InterPro"/>
</dbReference>
<dbReference type="CDD" id="cd00959">
    <property type="entry name" value="DeoC"/>
    <property type="match status" value="1"/>
</dbReference>
<dbReference type="Gene3D" id="3.20.20.70">
    <property type="entry name" value="Aldolase class I"/>
    <property type="match status" value="1"/>
</dbReference>
<dbReference type="HAMAP" id="MF_00592">
    <property type="entry name" value="DeoC_type2"/>
    <property type="match status" value="1"/>
</dbReference>
<dbReference type="InterPro" id="IPR013785">
    <property type="entry name" value="Aldolase_TIM"/>
</dbReference>
<dbReference type="InterPro" id="IPR011343">
    <property type="entry name" value="DeoC"/>
</dbReference>
<dbReference type="InterPro" id="IPR002915">
    <property type="entry name" value="DeoC/FbaB/LacD_aldolase"/>
</dbReference>
<dbReference type="InterPro" id="IPR023649">
    <property type="entry name" value="DeoC_typeII"/>
</dbReference>
<dbReference type="NCBIfam" id="TIGR00126">
    <property type="entry name" value="deoC"/>
    <property type="match status" value="1"/>
</dbReference>
<dbReference type="PANTHER" id="PTHR10889">
    <property type="entry name" value="DEOXYRIBOSE-PHOSPHATE ALDOLASE"/>
    <property type="match status" value="1"/>
</dbReference>
<dbReference type="PANTHER" id="PTHR10889:SF3">
    <property type="entry name" value="DEOXYRIBOSE-PHOSPHATE ALDOLASE"/>
    <property type="match status" value="1"/>
</dbReference>
<dbReference type="Pfam" id="PF01791">
    <property type="entry name" value="DeoC"/>
    <property type="match status" value="1"/>
</dbReference>
<dbReference type="PIRSF" id="PIRSF001357">
    <property type="entry name" value="DeoC"/>
    <property type="match status" value="1"/>
</dbReference>
<dbReference type="SMART" id="SM01133">
    <property type="entry name" value="DeoC"/>
    <property type="match status" value="1"/>
</dbReference>
<dbReference type="SUPFAM" id="SSF51569">
    <property type="entry name" value="Aldolase"/>
    <property type="match status" value="1"/>
</dbReference>
<evidence type="ECO:0000255" key="1">
    <source>
        <dbReference type="HAMAP-Rule" id="MF_00592"/>
    </source>
</evidence>
<organism>
    <name type="scientific">Glaesserella parasuis serovar 5 (strain SH0165)</name>
    <name type="common">Haemophilus parasuis</name>
    <dbReference type="NCBI Taxonomy" id="557723"/>
    <lineage>
        <taxon>Bacteria</taxon>
        <taxon>Pseudomonadati</taxon>
        <taxon>Pseudomonadota</taxon>
        <taxon>Gammaproteobacteria</taxon>
        <taxon>Pasteurellales</taxon>
        <taxon>Pasteurellaceae</taxon>
        <taxon>Glaesserella</taxon>
    </lineage>
</organism>
<feature type="chain" id="PRO_1000146964" description="Deoxyribose-phosphate aldolase">
    <location>
        <begin position="1"/>
        <end position="259"/>
    </location>
</feature>
<feature type="active site" description="Proton donor/acceptor" evidence="1">
    <location>
        <position position="101"/>
    </location>
</feature>
<feature type="active site" description="Schiff-base intermediate with acetaldehyde" evidence="1">
    <location>
        <position position="166"/>
    </location>
</feature>
<feature type="active site" description="Proton donor/acceptor" evidence="1">
    <location>
        <position position="200"/>
    </location>
</feature>
<keyword id="KW-0963">Cytoplasm</keyword>
<keyword id="KW-0456">Lyase</keyword>
<keyword id="KW-1185">Reference proteome</keyword>
<keyword id="KW-0704">Schiff base</keyword>
<proteinExistence type="inferred from homology"/>
<protein>
    <recommendedName>
        <fullName evidence="1">Deoxyribose-phosphate aldolase</fullName>
        <shortName evidence="1">DERA</shortName>
        <ecNumber evidence="1">4.1.2.4</ecNumber>
    </recommendedName>
    <alternativeName>
        <fullName evidence="1">2-deoxy-D-ribose 5-phosphate aldolase</fullName>
    </alternativeName>
    <alternativeName>
        <fullName evidence="1">Phosphodeoxyriboaldolase</fullName>
        <shortName evidence="1">Deoxyriboaldolase</shortName>
    </alternativeName>
</protein>
<sequence length="259" mass="27647">MSLKSIAKQALSLMDLTTLNDNDTDEKVVTLCQQGNTLFGTPAAVCVYPRFIPIARKTLKAQGAEQVKIATVTNFPHGNDDIDIAVAETKAAVAYGADEVDVVFPYRALIAGNEQVGFELVKQCKAVCSANNVALKVIIESGELKTAELIRKASEISIKAGADFIKTSTGKVPVNATLESAHIMLETIRDLGVADSVGFKAAGGVKTTEEAEQYLALTAEILGQDWINQAHFRFGASSLLANLLATLNDEQVNQNVTGY</sequence>
<accession>B8F671</accession>